<protein>
    <recommendedName>
        <fullName>Protein TIC110, chloroplastic</fullName>
    </recommendedName>
    <alternativeName>
        <fullName>Chloroplast inner envelope protein, 110 kDa</fullName>
        <shortName>psIEP110</shortName>
    </alternativeName>
    <alternativeName>
        <fullName>IAP100</fullName>
    </alternativeName>
    <alternativeName>
        <fullName>Translocon at the inner envelope membrane of chloroplasts 110</fullName>
    </alternativeName>
</protein>
<accession>O24303</accession>
<accession>O24293</accession>
<comment type="function">
    <text evidence="2 4">Involved in protein precursor import into chloroplasts. Forms a voltage-dependent cation-selective channel at the inner envelope of chloroplasts, which specifically responds to a transit peptide. Calcium acts as an effector of gating and selectivity.</text>
</comment>
<comment type="subunit">
    <text evidence="2 3">Part of the Tic complex. Interacts with TIC32, HSP93 and CPN60. Interacts with the Toc complex components TOC75 and TOC159. Binds specifically chloroplast pre-proteins.</text>
</comment>
<comment type="subcellular location">
    <subcellularLocation>
        <location evidence="9">Plastid</location>
        <location evidence="9">Chloroplast inner membrane</location>
        <topology evidence="9">Multi-pass membrane protein</topology>
    </subcellularLocation>
</comment>
<comment type="induction">
    <text evidence="5">Down-regulated by cold stress.</text>
</comment>
<comment type="domain">
    <text evidence="7">The N1 region (38-149) is sufficient for re-targeting to the inner membrane and proper insertion. The N2 region (150-269) may act as a start transfer signal, but it cannot direct proteins to the inner envelope.</text>
</comment>
<comment type="PTM">
    <text>Contains at least one interchain redox-active disulfide bond.</text>
</comment>
<comment type="miscellaneous">
    <text>PubMed:9632730 shows that the region 121-996 is located in the stroma while PubMed:18986981 indicates that it contains probably 4 trans-membrane domains resulting in 2 regions in the intermembrane space localized to form supercomplexes with the TOC machinery and to receive the transit peptide of pre-proteins.</text>
</comment>
<comment type="miscellaneous">
    <text>Inserts into the inner envelope membrane from the stroma after import from the cytoplasm.</text>
</comment>
<comment type="similarity">
    <text evidence="8">Belongs to the chloroplast envelope anion channel-forming Tic110 (TC 1.A.18) family.</text>
</comment>
<name>TI110_PEA</name>
<reference key="1">
    <citation type="journal article" date="1996" name="EMBO J.">
        <title>Topology of IEP110, a component of the chloroplastic protein import machinery present in the inner envelope membrane.</title>
        <authorList>
            <person name="Luebeck J."/>
            <person name="Soll J."/>
            <person name="Akita M."/>
            <person name="Nielsen E."/>
            <person name="Keegstra K."/>
        </authorList>
    </citation>
    <scope>NUCLEOTIDE SEQUENCE [MRNA]</scope>
    <scope>PROTEIN SEQUENCE OF 38-46</scope>
    <scope>SUBCELLULAR LOCATION</scope>
    <scope>TOPOLOGY</scope>
</reference>
<reference key="2">
    <citation type="journal article" date="1996" name="Proc. Natl. Acad. Sci. U.S.A.">
        <title>Interaction of the protein import and folding machineries of the chloroplast.</title>
        <authorList>
            <person name="Kessler F."/>
            <person name="Blobel G."/>
        </authorList>
    </citation>
    <scope>NUCLEOTIDE SEQUENCE [MRNA]</scope>
</reference>
<reference key="3">
    <citation type="journal article" date="1997" name="J. Cell Biol.">
        <title>A nuclear-coded chloroplastic inner envelope membrane protein uses a soluble sorting intermediate upon import into the organelle.</title>
        <authorList>
            <person name="Luebeck J."/>
            <person name="Heins L."/>
            <person name="Soll J."/>
        </authorList>
    </citation>
    <scope>DOMAIN</scope>
</reference>
<reference key="4">
    <citation type="journal article" date="1998" name="J. Biol. Chem.">
        <title>The hydrophilic domain of Tic110, an inner envelope membrane component of the chloroplastic protein translocation apparatus, faces the stromal compartment.</title>
        <authorList>
            <person name="Jackson D.T."/>
            <person name="Froehlich J.E."/>
            <person name="Keegstra K."/>
        </authorList>
    </citation>
    <scope>TOPOLOGY</scope>
</reference>
<reference key="5">
    <citation type="journal article" date="2003" name="J. Biol. Chem.">
        <title>atTic110 functions as a scaffold for coordinating the stromal events of protein import into chloroplasts.</title>
        <authorList>
            <person name="Inaba T."/>
            <person name="Li M."/>
            <person name="Alvarez-Huerta M."/>
            <person name="Kessler F."/>
            <person name="Schnell D.J."/>
        </authorList>
    </citation>
    <scope>FUNCTION</scope>
    <scope>INTERACTION WITH HHSP93; CPN60; TOC75 AND TOC159</scope>
</reference>
<reference key="6">
    <citation type="journal article" date="2004" name="J. Biol. Chem.">
        <title>Tic32, an essential component in chloroplast biogenesis.</title>
        <authorList>
            <person name="Hoermann F."/>
            <person name="Kuechler M."/>
            <person name="Sveshnikov D."/>
            <person name="Oppermann U."/>
            <person name="Li Y."/>
            <person name="Soll J."/>
        </authorList>
    </citation>
    <scope>INTERACTION WITH TIC32</scope>
</reference>
<reference key="7">
    <citation type="journal article" date="2009" name="J. Biol. Chem.">
        <title>Characterization of Tic110, a channel-forming protein at the inner envelope membrane of chloroplasts, unveils a response to Ca(2+) and a stromal regulatory disulfide bridge.</title>
        <authorList>
            <person name="Balsera M."/>
            <person name="Goetze T.A."/>
            <person name="Kovacs-Bogdan E."/>
            <person name="Schuermann P."/>
            <person name="Wagner R."/>
            <person name="Buchanan B.B."/>
            <person name="Soll J."/>
            <person name="Boelter B."/>
        </authorList>
    </citation>
    <scope>FUNCTION</scope>
    <scope>TOPOLOGY</scope>
</reference>
<reference key="8">
    <citation type="journal article" date="2009" name="Plant Physiol.">
        <title>Role of temperature stress on chloroplast biogenesis and protein import in pea.</title>
        <authorList>
            <person name="Dutta S."/>
            <person name="Mohanty S."/>
            <person name="Tripathy B.C."/>
        </authorList>
    </citation>
    <scope>INDUCTION BY COLD</scope>
</reference>
<reference key="9">
    <citation type="journal article" date="2010" name="Biochim. Biophys. Acta">
        <title>Protein import into chloroplasts: the Tic complex and its regulation.</title>
        <authorList>
            <person name="Kovacs-Bogdan E."/>
            <person name="Soll J."/>
            <person name="Bolter B."/>
        </authorList>
    </citation>
    <scope>REVIEW</scope>
</reference>
<keyword id="KW-0150">Chloroplast</keyword>
<keyword id="KW-0903">Direct protein sequencing</keyword>
<keyword id="KW-1015">Disulfide bond</keyword>
<keyword id="KW-0472">Membrane</keyword>
<keyword id="KW-0934">Plastid</keyword>
<keyword id="KW-1001">Plastid inner membrane</keyword>
<keyword id="KW-0653">Protein transport</keyword>
<keyword id="KW-0809">Transit peptide</keyword>
<keyword id="KW-0812">Transmembrane</keyword>
<keyword id="KW-1133">Transmembrane helix</keyword>
<keyword id="KW-0813">Transport</keyword>
<sequence>MNPSTLKPSHTHPSLLLPAPSPLRTQRRRFRVSLPRCSSDTNNPASSSSPPQRPPKELNGIEILVDKLSSPARLATSAVIVAGAVAAGYGLGSRFGGSRNAALGGAVALGAAGGAAAYALNAAAPQVAAVNLHNYVAGFDDPSILTREDIEVIANKYGVSKQDEAFKAEICDIYSEFVSSVIPPGGEELKGDEVDKIVNFKSSLGLDDPDAAAVHMEIGRKLFRQRLEVGDREGGVEQRRAFQKLIYVSNIVFGDASSFLLPWKRVFKVTESQVEVAIRDNAQRLYASKLKSVGRDFDLGKLVTLKETQSLCCLSDELAENLFREHARKLVEENISVALGILKSRTRAVPGVSQVVEEIEKVLAFNDLLISFKNHSDIDRLARGVGPVSLVGGEYDADRKIEDLKLLYRAYVSDALSSGRMEDNKFAALNQLKNIFGLGKREAEAILLDITRKVYRKRLGQTVSSGELEMADSKAAFLQNLCDELHFDPQKASELHEEIYRQKLQQCVADGELTDENVAALLKLRVMLCVPQQTVEAAHAEICGNLFEKIVKDAIASGVDGYDDETKKSVRKAAHGLRLTKETALSIASKAVRKMFITYVKRSRSAKGNGESAKELKKLIAFNTLVVTKLVEDIKGESPDVKIEEPKIEEPEEIRESEEYEMRITSDTQENKTGQRACRKDGKAWSDRITLKDDLPEKDRADLYKTFLTYCLTGDVVRIPFGVEIKKKKDDTEYIYLNQLGGILGLTGKVIMDVHRGLAEQAFRKQAEVLLADGQLTKARVEQLGKMQKEIGLSQEYAQKIIKNITTTKMAAAIETAVTQGKLNMKQIRELKESNVDLDSMVSVSLRETIFKKTVGDIFSSGTGEFDEEEVYEKIPLDLNINKEKARGVVCELAQNRLSNSLIQAVALLRQRNHKGVVFSLNNLLACDKAVPSQTLSWEVSEELSDLYTIYLKSDPSPEKLSRLQYLLGINDSTAAALRDSEDSLLETAEEEKFVF</sequence>
<organism>
    <name type="scientific">Pisum sativum</name>
    <name type="common">Garden pea</name>
    <name type="synonym">Lathyrus oleraceus</name>
    <dbReference type="NCBI Taxonomy" id="3888"/>
    <lineage>
        <taxon>Eukaryota</taxon>
        <taxon>Viridiplantae</taxon>
        <taxon>Streptophyta</taxon>
        <taxon>Embryophyta</taxon>
        <taxon>Tracheophyta</taxon>
        <taxon>Spermatophyta</taxon>
        <taxon>Magnoliopsida</taxon>
        <taxon>eudicotyledons</taxon>
        <taxon>Gunneridae</taxon>
        <taxon>Pentapetalae</taxon>
        <taxon>rosids</taxon>
        <taxon>fabids</taxon>
        <taxon>Fabales</taxon>
        <taxon>Fabaceae</taxon>
        <taxon>Papilionoideae</taxon>
        <taxon>50 kb inversion clade</taxon>
        <taxon>NPAAA clade</taxon>
        <taxon>Hologalegina</taxon>
        <taxon>IRL clade</taxon>
        <taxon>Fabeae</taxon>
        <taxon>Pisum</taxon>
    </lineage>
</organism>
<proteinExistence type="evidence at protein level"/>
<feature type="transit peptide" description="Chloroplast" evidence="6">
    <location>
        <begin position="1"/>
        <end position="37"/>
    </location>
</feature>
<feature type="chain" id="PRO_0000413669" description="Protein TIC110, chloroplastic">
    <location>
        <begin position="38"/>
        <end position="996"/>
    </location>
</feature>
<feature type="topological domain" description="Stromal" evidence="8">
    <location>
        <begin position="38"/>
        <end position="73"/>
    </location>
</feature>
<feature type="transmembrane region" description="Helical" evidence="8">
    <location>
        <begin position="74"/>
        <end position="92"/>
    </location>
</feature>
<feature type="topological domain" description="Chloroplast intermembrane" evidence="8">
    <location>
        <begin position="93"/>
        <end position="100"/>
    </location>
</feature>
<feature type="transmembrane region" description="Helical" evidence="8">
    <location>
        <begin position="101"/>
        <end position="120"/>
    </location>
</feature>
<feature type="topological domain" description="Stromal" evidence="8">
    <location>
        <begin position="121"/>
        <end position="244"/>
    </location>
</feature>
<feature type="transmembrane region" description="Helical" evidence="8">
    <location>
        <begin position="245"/>
        <end position="262"/>
    </location>
</feature>
<feature type="topological domain" description="Chloroplast intermembrane" evidence="8">
    <location>
        <begin position="263"/>
        <end position="349"/>
    </location>
</feature>
<feature type="transmembrane region" description="Helical" evidence="8">
    <location>
        <begin position="350"/>
        <end position="367"/>
    </location>
</feature>
<feature type="topological domain" description="Stromal" evidence="8">
    <location>
        <begin position="368"/>
        <end position="613"/>
    </location>
</feature>
<feature type="transmembrane region" description="Helical" evidence="8">
    <location>
        <begin position="614"/>
        <end position="631"/>
    </location>
</feature>
<feature type="topological domain" description="Chloroplast intermembrane" evidence="8">
    <location>
        <begin position="632"/>
        <end position="702"/>
    </location>
</feature>
<feature type="transmembrane region" description="Helical" evidence="8">
    <location>
        <begin position="703"/>
        <end position="719"/>
    </location>
</feature>
<feature type="topological domain" description="Stromal" evidence="8">
    <location>
        <begin position="720"/>
        <end position="996"/>
    </location>
</feature>
<feature type="region of interest" description="Disordered" evidence="1">
    <location>
        <begin position="1"/>
        <end position="57"/>
    </location>
</feature>
<feature type="compositionally biased region" description="Low complexity" evidence="1">
    <location>
        <begin position="1"/>
        <end position="18"/>
    </location>
</feature>
<feature type="compositionally biased region" description="Low complexity" evidence="1">
    <location>
        <begin position="38"/>
        <end position="50"/>
    </location>
</feature>
<feature type="sequence conflict" description="In Ref. 1; CAA92823." evidence="8" ref="1">
    <original>C</original>
    <variation>R</variation>
    <location>
        <position position="313"/>
    </location>
</feature>
<feature type="sequence conflict" description="In Ref. 1; CAA92823." evidence="8" ref="1">
    <original>I</original>
    <variation>L</variation>
    <location>
        <position position="359"/>
    </location>
</feature>
<feature type="sequence conflict" description="In Ref. 1; CAA92823." evidence="8" ref="1">
    <original>A</original>
    <variation>S</variation>
    <location>
        <position position="364"/>
    </location>
</feature>
<feature type="sequence conflict" description="In Ref. 1; CAA92823." evidence="8" ref="1">
    <original>L</original>
    <variation>P</variation>
    <location>
        <position position="416"/>
    </location>
</feature>
<feature type="sequence conflict" description="In Ref. 1; CAA92823." evidence="8" ref="1">
    <original>K</original>
    <variation>R</variation>
    <location>
        <position position="594"/>
    </location>
</feature>
<feature type="sequence conflict" description="In Ref. 1; CAA92823." evidence="8" ref="1">
    <original>MRITSDTQENKTGQRACRKDGKAWSDR</original>
    <variation>WESLQTLKKTRPDKELVEKMGKPGQTE</variation>
    <location>
        <begin position="662"/>
        <end position="688"/>
    </location>
</feature>
<feature type="sequence conflict" description="In Ref. 1; CAA92823." evidence="8" ref="1">
    <original>F</original>
    <variation>S</variation>
    <location>
        <position position="919"/>
    </location>
</feature>
<gene>
    <name type="primary">TIC110</name>
    <name type="synonym">IEP110</name>
</gene>
<evidence type="ECO:0000256" key="1">
    <source>
        <dbReference type="SAM" id="MobiDB-lite"/>
    </source>
</evidence>
<evidence type="ECO:0000269" key="2">
    <source>
    </source>
</evidence>
<evidence type="ECO:0000269" key="3">
    <source>
    </source>
</evidence>
<evidence type="ECO:0000269" key="4">
    <source>
    </source>
</evidence>
<evidence type="ECO:0000269" key="5">
    <source>
    </source>
</evidence>
<evidence type="ECO:0000269" key="6">
    <source>
    </source>
</evidence>
<evidence type="ECO:0000269" key="7">
    <source>
    </source>
</evidence>
<evidence type="ECO:0000305" key="8"/>
<evidence type="ECO:0000305" key="9">
    <source>
    </source>
</evidence>
<dbReference type="EMBL" id="Z68506">
    <property type="protein sequence ID" value="CAA92823.1"/>
    <property type="molecule type" value="mRNA"/>
</dbReference>
<dbReference type="EMBL" id="U56419">
    <property type="protein sequence ID" value="AAC49399.1"/>
    <property type="molecule type" value="mRNA"/>
</dbReference>
<dbReference type="PIR" id="S71750">
    <property type="entry name" value="S71750"/>
</dbReference>
<dbReference type="DIP" id="DIP-33729N"/>
<dbReference type="IntAct" id="O24303">
    <property type="interactions" value="6"/>
</dbReference>
<dbReference type="TCDB" id="1.A.18.1.1">
    <property type="family name" value="the chloroplast envelope anion channel-forming tic110 (tic110) family"/>
</dbReference>
<dbReference type="TCDB" id="3.A.9.1.1">
    <property type="family name" value="the chloroplast envelope protein translocase (cept or tic-toc) family"/>
</dbReference>
<dbReference type="GO" id="GO:0009706">
    <property type="term" value="C:chloroplast inner membrane"/>
    <property type="evidence" value="ECO:0007669"/>
    <property type="project" value="UniProtKB-SubCell"/>
</dbReference>
<dbReference type="GO" id="GO:0061927">
    <property type="term" value="C:TOC-TIC supercomplex I"/>
    <property type="evidence" value="ECO:0007669"/>
    <property type="project" value="TreeGrafter"/>
</dbReference>
<dbReference type="GO" id="GO:0045037">
    <property type="term" value="P:protein import into chloroplast stroma"/>
    <property type="evidence" value="ECO:0007669"/>
    <property type="project" value="TreeGrafter"/>
</dbReference>
<dbReference type="InterPro" id="IPR031610">
    <property type="entry name" value="TIC110"/>
</dbReference>
<dbReference type="PANTHER" id="PTHR34935">
    <property type="entry name" value="PROTEIN TIC110, CHLOROPLASTIC"/>
    <property type="match status" value="1"/>
</dbReference>
<dbReference type="PANTHER" id="PTHR34935:SF3">
    <property type="entry name" value="PROTEIN TIC110, CHLOROPLASTIC"/>
    <property type="match status" value="1"/>
</dbReference>
<dbReference type="Pfam" id="PF16940">
    <property type="entry name" value="Tic110"/>
    <property type="match status" value="1"/>
</dbReference>